<gene>
    <name evidence="1" type="primary">leuS</name>
    <name type="ordered locus">VF_0753</name>
</gene>
<name>SYL_ALIF1</name>
<keyword id="KW-0030">Aminoacyl-tRNA synthetase</keyword>
<keyword id="KW-0067">ATP-binding</keyword>
<keyword id="KW-0963">Cytoplasm</keyword>
<keyword id="KW-0436">Ligase</keyword>
<keyword id="KW-0547">Nucleotide-binding</keyword>
<keyword id="KW-0648">Protein biosynthesis</keyword>
<keyword id="KW-1185">Reference proteome</keyword>
<sequence>MQEQYNPQDLEQKIQKHWDDNKTFVVTEDANKEKFYCLSMFPYPSGRLHMGHVRNYTIGDVVSRYQRLQGKNVMQPIGWDAFGLPAENAAVKNKTAPAPWTYENIEYMKNQLKLLGFGYDWNREFATCTPEYYRWEQEFFTKLYNKGLVYKKTSSVNWCPNDQTVLANEQVEDGCCWRCDTPVEQKKIPQWFIKITEYAQELLDDLDNLDGWPEMVKTMQRNWIGRSEGVELSFAVNGETSPLEVYTTRPDTLMGVTYVGIAAGHPLAEKASQNNPELAAFVEECRNTKVAEAELATMEKKGMDTGLRAIHPLNGREVPVFVANFVLMDYGTGAVMAVPAHDQRDFEFATKYGLDIIPVIKPEDGSDLDVSEAAYTEKGVLFDSGEFDGLAFQEAFDAIAAKLEAEGKGKKTVNFRLRDWGVSRQRYWGAPIPMVTTEDGEVHPVPADQLPVILPEDVVMDGVTSPIKADKEWAKTTFNGEPALRETDTFDTFMESSWYYARYCSPQADDILDPEKANYWLPVDQYIGGIEHACMHLLYSRFFHKLLRDAGYVTSDEPFKQLLCQGMVLADAFYYTNDKGGKEWVAPTDVTIERDGKGRIEKAIDDQGREVEHSGMIKMSKSKNNGIDPQEMVDKYGADTVRLFMMFASPADMTLEWQESGVEGANRFLKRVWKLVHEHTNKGTTEALDTSSLTGDQKALRRDVHKTIAKVSDDIGRRQTFNTAIAAIMELMNKLNKAPQESAQDRALLDEALKAVVAMLYPMTPHASFAMWEALGESDLDSATWPTFDENALVEDEKTIVVMINGKLRAKLVVAADATEEHVRELGLKDENAMKFLDGLTIRKVIYVPGKLLNIVAN</sequence>
<comment type="catalytic activity">
    <reaction evidence="1">
        <text>tRNA(Leu) + L-leucine + ATP = L-leucyl-tRNA(Leu) + AMP + diphosphate</text>
        <dbReference type="Rhea" id="RHEA:11688"/>
        <dbReference type="Rhea" id="RHEA-COMP:9613"/>
        <dbReference type="Rhea" id="RHEA-COMP:9622"/>
        <dbReference type="ChEBI" id="CHEBI:30616"/>
        <dbReference type="ChEBI" id="CHEBI:33019"/>
        <dbReference type="ChEBI" id="CHEBI:57427"/>
        <dbReference type="ChEBI" id="CHEBI:78442"/>
        <dbReference type="ChEBI" id="CHEBI:78494"/>
        <dbReference type="ChEBI" id="CHEBI:456215"/>
        <dbReference type="EC" id="6.1.1.4"/>
    </reaction>
</comment>
<comment type="subcellular location">
    <subcellularLocation>
        <location evidence="1">Cytoplasm</location>
    </subcellularLocation>
</comment>
<comment type="similarity">
    <text evidence="1">Belongs to the class-I aminoacyl-tRNA synthetase family.</text>
</comment>
<reference key="1">
    <citation type="journal article" date="2005" name="Proc. Natl. Acad. Sci. U.S.A.">
        <title>Complete genome sequence of Vibrio fischeri: a symbiotic bacterium with pathogenic congeners.</title>
        <authorList>
            <person name="Ruby E.G."/>
            <person name="Urbanowski M."/>
            <person name="Campbell J."/>
            <person name="Dunn A."/>
            <person name="Faini M."/>
            <person name="Gunsalus R."/>
            <person name="Lostroh P."/>
            <person name="Lupp C."/>
            <person name="McCann J."/>
            <person name="Millikan D."/>
            <person name="Schaefer A."/>
            <person name="Stabb E."/>
            <person name="Stevens A."/>
            <person name="Visick K."/>
            <person name="Whistler C."/>
            <person name="Greenberg E.P."/>
        </authorList>
    </citation>
    <scope>NUCLEOTIDE SEQUENCE [LARGE SCALE GENOMIC DNA]</scope>
    <source>
        <strain>ATCC 700601 / ES114</strain>
    </source>
</reference>
<protein>
    <recommendedName>
        <fullName evidence="1">Leucine--tRNA ligase</fullName>
        <ecNumber evidence="1">6.1.1.4</ecNumber>
    </recommendedName>
    <alternativeName>
        <fullName evidence="1">Leucyl-tRNA synthetase</fullName>
        <shortName evidence="1">LeuRS</shortName>
    </alternativeName>
</protein>
<accession>Q5E6U8</accession>
<evidence type="ECO:0000255" key="1">
    <source>
        <dbReference type="HAMAP-Rule" id="MF_00049"/>
    </source>
</evidence>
<feature type="chain" id="PRO_1000009462" description="Leucine--tRNA ligase">
    <location>
        <begin position="1"/>
        <end position="858"/>
    </location>
</feature>
<feature type="short sequence motif" description="'HIGH' region">
    <location>
        <begin position="42"/>
        <end position="52"/>
    </location>
</feature>
<feature type="short sequence motif" description="'KMSKS' region">
    <location>
        <begin position="618"/>
        <end position="622"/>
    </location>
</feature>
<feature type="binding site" evidence="1">
    <location>
        <position position="621"/>
    </location>
    <ligand>
        <name>ATP</name>
        <dbReference type="ChEBI" id="CHEBI:30616"/>
    </ligand>
</feature>
<proteinExistence type="inferred from homology"/>
<organism>
    <name type="scientific">Aliivibrio fischeri (strain ATCC 700601 / ES114)</name>
    <name type="common">Vibrio fischeri</name>
    <dbReference type="NCBI Taxonomy" id="312309"/>
    <lineage>
        <taxon>Bacteria</taxon>
        <taxon>Pseudomonadati</taxon>
        <taxon>Pseudomonadota</taxon>
        <taxon>Gammaproteobacteria</taxon>
        <taxon>Vibrionales</taxon>
        <taxon>Vibrionaceae</taxon>
        <taxon>Aliivibrio</taxon>
    </lineage>
</organism>
<dbReference type="EC" id="6.1.1.4" evidence="1"/>
<dbReference type="EMBL" id="CP000020">
    <property type="protein sequence ID" value="AAW85248.1"/>
    <property type="molecule type" value="Genomic_DNA"/>
</dbReference>
<dbReference type="RefSeq" id="WP_011261460.1">
    <property type="nucleotide sequence ID" value="NC_006840.2"/>
</dbReference>
<dbReference type="RefSeq" id="YP_204136.1">
    <property type="nucleotide sequence ID" value="NC_006840.2"/>
</dbReference>
<dbReference type="SMR" id="Q5E6U8"/>
<dbReference type="STRING" id="312309.VF_0753"/>
<dbReference type="EnsemblBacteria" id="AAW85248">
    <property type="protein sequence ID" value="AAW85248"/>
    <property type="gene ID" value="VF_0753"/>
</dbReference>
<dbReference type="GeneID" id="54163407"/>
<dbReference type="KEGG" id="vfi:VF_0753"/>
<dbReference type="PATRIC" id="fig|312309.11.peg.746"/>
<dbReference type="eggNOG" id="COG0495">
    <property type="taxonomic scope" value="Bacteria"/>
</dbReference>
<dbReference type="HOGENOM" id="CLU_004427_0_0_6"/>
<dbReference type="OrthoDB" id="9810365at2"/>
<dbReference type="Proteomes" id="UP000000537">
    <property type="component" value="Chromosome I"/>
</dbReference>
<dbReference type="GO" id="GO:0005829">
    <property type="term" value="C:cytosol"/>
    <property type="evidence" value="ECO:0007669"/>
    <property type="project" value="TreeGrafter"/>
</dbReference>
<dbReference type="GO" id="GO:0002161">
    <property type="term" value="F:aminoacyl-tRNA deacylase activity"/>
    <property type="evidence" value="ECO:0007669"/>
    <property type="project" value="InterPro"/>
</dbReference>
<dbReference type="GO" id="GO:0005524">
    <property type="term" value="F:ATP binding"/>
    <property type="evidence" value="ECO:0007669"/>
    <property type="project" value="UniProtKB-UniRule"/>
</dbReference>
<dbReference type="GO" id="GO:0004823">
    <property type="term" value="F:leucine-tRNA ligase activity"/>
    <property type="evidence" value="ECO:0007669"/>
    <property type="project" value="UniProtKB-UniRule"/>
</dbReference>
<dbReference type="GO" id="GO:0006429">
    <property type="term" value="P:leucyl-tRNA aminoacylation"/>
    <property type="evidence" value="ECO:0007669"/>
    <property type="project" value="UniProtKB-UniRule"/>
</dbReference>
<dbReference type="CDD" id="cd07958">
    <property type="entry name" value="Anticodon_Ia_Leu_BEm"/>
    <property type="match status" value="1"/>
</dbReference>
<dbReference type="CDD" id="cd00812">
    <property type="entry name" value="LeuRS_core"/>
    <property type="match status" value="1"/>
</dbReference>
<dbReference type="FunFam" id="1.10.730.10:FF:000002">
    <property type="entry name" value="Leucine--tRNA ligase"/>
    <property type="match status" value="1"/>
</dbReference>
<dbReference type="FunFam" id="2.20.28.290:FF:000001">
    <property type="entry name" value="Leucine--tRNA ligase"/>
    <property type="match status" value="1"/>
</dbReference>
<dbReference type="FunFam" id="3.10.20.590:FF:000001">
    <property type="entry name" value="Leucine--tRNA ligase"/>
    <property type="match status" value="1"/>
</dbReference>
<dbReference type="FunFam" id="3.40.50.620:FF:000003">
    <property type="entry name" value="Leucine--tRNA ligase"/>
    <property type="match status" value="1"/>
</dbReference>
<dbReference type="FunFam" id="3.40.50.620:FF:000051">
    <property type="entry name" value="Leucine--tRNA ligase"/>
    <property type="match status" value="1"/>
</dbReference>
<dbReference type="Gene3D" id="2.20.28.290">
    <property type="match status" value="1"/>
</dbReference>
<dbReference type="Gene3D" id="3.10.20.590">
    <property type="match status" value="1"/>
</dbReference>
<dbReference type="Gene3D" id="3.40.50.620">
    <property type="entry name" value="HUPs"/>
    <property type="match status" value="2"/>
</dbReference>
<dbReference type="Gene3D" id="1.10.730.10">
    <property type="entry name" value="Isoleucyl-tRNA Synthetase, Domain 1"/>
    <property type="match status" value="1"/>
</dbReference>
<dbReference type="HAMAP" id="MF_00049_B">
    <property type="entry name" value="Leu_tRNA_synth_B"/>
    <property type="match status" value="1"/>
</dbReference>
<dbReference type="InterPro" id="IPR001412">
    <property type="entry name" value="aa-tRNA-synth_I_CS"/>
</dbReference>
<dbReference type="InterPro" id="IPR002300">
    <property type="entry name" value="aa-tRNA-synth_Ia"/>
</dbReference>
<dbReference type="InterPro" id="IPR002302">
    <property type="entry name" value="Leu-tRNA-ligase"/>
</dbReference>
<dbReference type="InterPro" id="IPR025709">
    <property type="entry name" value="Leu_tRNA-synth_edit"/>
</dbReference>
<dbReference type="InterPro" id="IPR013155">
    <property type="entry name" value="M/V/L/I-tRNA-synth_anticd-bd"/>
</dbReference>
<dbReference type="InterPro" id="IPR015413">
    <property type="entry name" value="Methionyl/Leucyl_tRNA_Synth"/>
</dbReference>
<dbReference type="InterPro" id="IPR014729">
    <property type="entry name" value="Rossmann-like_a/b/a_fold"/>
</dbReference>
<dbReference type="InterPro" id="IPR009080">
    <property type="entry name" value="tRNAsynth_Ia_anticodon-bd"/>
</dbReference>
<dbReference type="InterPro" id="IPR009008">
    <property type="entry name" value="Val/Leu/Ile-tRNA-synth_edit"/>
</dbReference>
<dbReference type="NCBIfam" id="TIGR00396">
    <property type="entry name" value="leuS_bact"/>
    <property type="match status" value="1"/>
</dbReference>
<dbReference type="PANTHER" id="PTHR43740:SF2">
    <property type="entry name" value="LEUCINE--TRNA LIGASE, MITOCHONDRIAL"/>
    <property type="match status" value="1"/>
</dbReference>
<dbReference type="PANTHER" id="PTHR43740">
    <property type="entry name" value="LEUCYL-TRNA SYNTHETASE"/>
    <property type="match status" value="1"/>
</dbReference>
<dbReference type="Pfam" id="PF08264">
    <property type="entry name" value="Anticodon_1"/>
    <property type="match status" value="1"/>
</dbReference>
<dbReference type="Pfam" id="PF00133">
    <property type="entry name" value="tRNA-synt_1"/>
    <property type="match status" value="2"/>
</dbReference>
<dbReference type="Pfam" id="PF13603">
    <property type="entry name" value="tRNA-synt_1_2"/>
    <property type="match status" value="1"/>
</dbReference>
<dbReference type="Pfam" id="PF09334">
    <property type="entry name" value="tRNA-synt_1g"/>
    <property type="match status" value="1"/>
</dbReference>
<dbReference type="PRINTS" id="PR00985">
    <property type="entry name" value="TRNASYNTHLEU"/>
</dbReference>
<dbReference type="SUPFAM" id="SSF47323">
    <property type="entry name" value="Anticodon-binding domain of a subclass of class I aminoacyl-tRNA synthetases"/>
    <property type="match status" value="1"/>
</dbReference>
<dbReference type="SUPFAM" id="SSF52374">
    <property type="entry name" value="Nucleotidylyl transferase"/>
    <property type="match status" value="1"/>
</dbReference>
<dbReference type="SUPFAM" id="SSF50677">
    <property type="entry name" value="ValRS/IleRS/LeuRS editing domain"/>
    <property type="match status" value="1"/>
</dbReference>
<dbReference type="PROSITE" id="PS00178">
    <property type="entry name" value="AA_TRNA_LIGASE_I"/>
    <property type="match status" value="1"/>
</dbReference>